<evidence type="ECO:0000256" key="1">
    <source>
        <dbReference type="SAM" id="MobiDB-lite"/>
    </source>
</evidence>
<dbReference type="EMBL" id="M15319">
    <property type="protein sequence ID" value="AAA29470.1"/>
    <property type="molecule type" value="mRNA"/>
</dbReference>
<dbReference type="PIR" id="A45605">
    <property type="entry name" value="A45605"/>
</dbReference>
<dbReference type="SMR" id="P08116"/>
<dbReference type="VEuPathDB" id="PlasmoDB:PF3D7_0500800"/>
<dbReference type="VEuPathDB" id="PlasmoDB:Pf7G8-2_000120300"/>
<dbReference type="VEuPathDB" id="PlasmoDB:Pf7G8_050006300"/>
<dbReference type="VEuPathDB" id="PlasmoDB:PfCD01_050007500"/>
<dbReference type="VEuPathDB" id="PlasmoDB:PfDd2_050006000"/>
<dbReference type="VEuPathDB" id="PlasmoDB:PfGA01_050005500"/>
<dbReference type="VEuPathDB" id="PlasmoDB:PfGB4_050006200"/>
<dbReference type="VEuPathDB" id="PlasmoDB:PfGN01_050005900"/>
<dbReference type="VEuPathDB" id="PlasmoDB:PfHB3_050006000"/>
<dbReference type="VEuPathDB" id="PlasmoDB:PfIT_050006200"/>
<dbReference type="VEuPathDB" id="PlasmoDB:PfKE01_050005500"/>
<dbReference type="VEuPathDB" id="PlasmoDB:PfKH01_050006500"/>
<dbReference type="VEuPathDB" id="PlasmoDB:PfKH02_050006500"/>
<dbReference type="VEuPathDB" id="PlasmoDB:PfML01_050005900"/>
<dbReference type="VEuPathDB" id="PlasmoDB:PfNF135_050006600"/>
<dbReference type="VEuPathDB" id="PlasmoDB:PfNF166_050006200"/>
<dbReference type="VEuPathDB" id="PlasmoDB:PfNF54_050005500"/>
<dbReference type="VEuPathDB" id="PlasmoDB:PfSD01_050006000"/>
<dbReference type="VEuPathDB" id="PlasmoDB:PfSN01_050006300"/>
<dbReference type="VEuPathDB" id="PlasmoDB:PfTG01_050006000"/>
<reference key="1">
    <citation type="journal article" date="1986" name="Mol. Biochem. Parasitol.">
        <title>Variable antigen associated with the surface of erythrocytes infected with mature stages of Plasmodium falciparum.</title>
        <authorList>
            <person name="Coppel R.L."/>
            <person name="Culvenor J.G."/>
            <person name="Bianco A.E."/>
            <person name="Crewther P.E."/>
            <person name="Stahl H.-D."/>
            <person name="Brown G.V."/>
            <person name="Anders R.F."/>
            <person name="Kemp D.J."/>
        </authorList>
    </citation>
    <scope>NUCLEOTIDE SEQUENCE [MRNA]</scope>
</reference>
<name>PVA_PLAFA</name>
<organism>
    <name type="scientific">Plasmodium falciparum</name>
    <dbReference type="NCBI Taxonomy" id="5833"/>
    <lineage>
        <taxon>Eukaryota</taxon>
        <taxon>Sar</taxon>
        <taxon>Alveolata</taxon>
        <taxon>Apicomplexa</taxon>
        <taxon>Aconoidasida</taxon>
        <taxon>Haemosporida</taxon>
        <taxon>Plasmodiidae</taxon>
        <taxon>Plasmodium</taxon>
        <taxon>Plasmodium (Laverania)</taxon>
    </lineage>
</organism>
<keyword id="KW-0461">Malaria</keyword>
<keyword id="KW-0677">Repeat</keyword>
<proteinExistence type="evidence at transcript level"/>
<sequence length="224" mass="24749">ETGESKETGESKETGESKETGESKETGESKETGESKETGESKETGESKETGESKETGESKETGESKETGESKETGESKETGESKETGESKETGESKETGESKETRIYEETKYNKITSEFRETENVKITEESKDREGNKVSGPYENSENSNVTSESEETKKLAEKEENEGEKLGENVNDGASENSEDPKKLTEQEENGTKESSEETKDDKPEENEKKADNKKKKK</sequence>
<accession>P08116</accession>
<protein>
    <recommendedName>
        <fullName>Processed variable antigen</fullName>
    </recommendedName>
</protein>
<feature type="chain" id="PRO_0000217191" description="Processed variable antigen">
    <location>
        <begin position="1" status="less than"/>
        <end position="224" status="greater than"/>
    </location>
</feature>
<feature type="repeat" description="1">
    <location>
        <begin position="1"/>
        <end position="6"/>
    </location>
</feature>
<feature type="repeat" description="2">
    <location>
        <begin position="7"/>
        <end position="12"/>
    </location>
</feature>
<feature type="repeat" description="3">
    <location>
        <begin position="13"/>
        <end position="18"/>
    </location>
</feature>
<feature type="repeat" description="4">
    <location>
        <begin position="19"/>
        <end position="24"/>
    </location>
</feature>
<feature type="repeat" description="5">
    <location>
        <begin position="25"/>
        <end position="30"/>
    </location>
</feature>
<feature type="repeat" description="6">
    <location>
        <begin position="31"/>
        <end position="36"/>
    </location>
</feature>
<feature type="repeat" description="7">
    <location>
        <begin position="37"/>
        <end position="42"/>
    </location>
</feature>
<feature type="repeat" description="8">
    <location>
        <begin position="43"/>
        <end position="48"/>
    </location>
</feature>
<feature type="repeat" description="9">
    <location>
        <begin position="49"/>
        <end position="54"/>
    </location>
</feature>
<feature type="repeat" description="10">
    <location>
        <begin position="55"/>
        <end position="60"/>
    </location>
</feature>
<feature type="repeat" description="11">
    <location>
        <begin position="61"/>
        <end position="66"/>
    </location>
</feature>
<feature type="repeat" description="12">
    <location>
        <begin position="67"/>
        <end position="72"/>
    </location>
</feature>
<feature type="repeat" description="13">
    <location>
        <begin position="73"/>
        <end position="78"/>
    </location>
</feature>
<feature type="repeat" description="14">
    <location>
        <begin position="79"/>
        <end position="84"/>
    </location>
</feature>
<feature type="repeat" description="15">
    <location>
        <begin position="85"/>
        <end position="90"/>
    </location>
</feature>
<feature type="repeat" description="16">
    <location>
        <begin position="91"/>
        <end position="96"/>
    </location>
</feature>
<feature type="repeat" description="17">
    <location>
        <begin position="97"/>
        <end position="102"/>
    </location>
</feature>
<feature type="region of interest" description="Disordered" evidence="1">
    <location>
        <begin position="1"/>
        <end position="224"/>
    </location>
</feature>
<feature type="region of interest" description="17 X 6 AA tandem repeats of E-T-G-E-S-K">
    <location>
        <begin position="1"/>
        <end position="102"/>
    </location>
</feature>
<feature type="compositionally biased region" description="Basic and acidic residues" evidence="1">
    <location>
        <begin position="1"/>
        <end position="137"/>
    </location>
</feature>
<feature type="compositionally biased region" description="Low complexity" evidence="1">
    <location>
        <begin position="144"/>
        <end position="153"/>
    </location>
</feature>
<feature type="compositionally biased region" description="Basic and acidic residues" evidence="1">
    <location>
        <begin position="156"/>
        <end position="173"/>
    </location>
</feature>
<feature type="compositionally biased region" description="Basic and acidic residues" evidence="1">
    <location>
        <begin position="185"/>
        <end position="217"/>
    </location>
</feature>
<feature type="non-terminal residue">
    <location>
        <position position="1"/>
    </location>
</feature>
<feature type="non-terminal residue">
    <location>
        <position position="224"/>
    </location>
</feature>
<comment type="miscellaneous">
    <text>This variable antigen is associated with the surface of erythrocytes infected with mature stages of plasmodium falciparum.</text>
</comment>